<gene>
    <name evidence="1" type="primary">coaX</name>
    <name type="ordered locus">BCG_3664c</name>
</gene>
<evidence type="ECO:0000255" key="1">
    <source>
        <dbReference type="HAMAP-Rule" id="MF_01274"/>
    </source>
</evidence>
<name>COAX_MYCBP</name>
<protein>
    <recommendedName>
        <fullName evidence="1">Type III pantothenate kinase</fullName>
        <ecNumber evidence="1">2.7.1.33</ecNumber>
    </recommendedName>
    <alternativeName>
        <fullName evidence="1">PanK-III</fullName>
    </alternativeName>
    <alternativeName>
        <fullName evidence="1">Pantothenic acid kinase</fullName>
    </alternativeName>
</protein>
<comment type="function">
    <text evidence="1">Catalyzes the phosphorylation of pantothenate (Pan), the first step in CoA biosynthesis.</text>
</comment>
<comment type="catalytic activity">
    <reaction evidence="1">
        <text>(R)-pantothenate + ATP = (R)-4'-phosphopantothenate + ADP + H(+)</text>
        <dbReference type="Rhea" id="RHEA:16373"/>
        <dbReference type="ChEBI" id="CHEBI:10986"/>
        <dbReference type="ChEBI" id="CHEBI:15378"/>
        <dbReference type="ChEBI" id="CHEBI:29032"/>
        <dbReference type="ChEBI" id="CHEBI:30616"/>
        <dbReference type="ChEBI" id="CHEBI:456216"/>
        <dbReference type="EC" id="2.7.1.33"/>
    </reaction>
</comment>
<comment type="cofactor">
    <cofactor evidence="1">
        <name>NH4(+)</name>
        <dbReference type="ChEBI" id="CHEBI:28938"/>
    </cofactor>
    <cofactor evidence="1">
        <name>K(+)</name>
        <dbReference type="ChEBI" id="CHEBI:29103"/>
    </cofactor>
    <text evidence="1">A monovalent cation. Ammonium or potassium.</text>
</comment>
<comment type="pathway">
    <text evidence="1">Cofactor biosynthesis; coenzyme A biosynthesis; CoA from (R)-pantothenate: step 1/5.</text>
</comment>
<comment type="subunit">
    <text evidence="1">Homodimer.</text>
</comment>
<comment type="subcellular location">
    <subcellularLocation>
        <location evidence="1">Cytoplasm</location>
    </subcellularLocation>
</comment>
<comment type="similarity">
    <text evidence="1">Belongs to the type III pantothenate kinase family.</text>
</comment>
<organism>
    <name type="scientific">Mycobacterium bovis (strain BCG / Pasteur 1173P2)</name>
    <dbReference type="NCBI Taxonomy" id="410289"/>
    <lineage>
        <taxon>Bacteria</taxon>
        <taxon>Bacillati</taxon>
        <taxon>Actinomycetota</taxon>
        <taxon>Actinomycetes</taxon>
        <taxon>Mycobacteriales</taxon>
        <taxon>Mycobacteriaceae</taxon>
        <taxon>Mycobacterium</taxon>
        <taxon>Mycobacterium tuberculosis complex</taxon>
    </lineage>
</organism>
<reference key="1">
    <citation type="journal article" date="2007" name="Proc. Natl. Acad. Sci. U.S.A.">
        <title>Genome plasticity of BCG and impact on vaccine efficacy.</title>
        <authorList>
            <person name="Brosch R."/>
            <person name="Gordon S.V."/>
            <person name="Garnier T."/>
            <person name="Eiglmeier K."/>
            <person name="Frigui W."/>
            <person name="Valenti P."/>
            <person name="Dos Santos S."/>
            <person name="Duthoy S."/>
            <person name="Lacroix C."/>
            <person name="Garcia-Pelayo C."/>
            <person name="Inwald J.K."/>
            <person name="Golby P."/>
            <person name="Garcia J.N."/>
            <person name="Hewinson R.G."/>
            <person name="Behr M.A."/>
            <person name="Quail M.A."/>
            <person name="Churcher C."/>
            <person name="Barrell B.G."/>
            <person name="Parkhill J."/>
            <person name="Cole S.T."/>
        </authorList>
    </citation>
    <scope>NUCLEOTIDE SEQUENCE [LARGE SCALE GENOMIC DNA]</scope>
    <source>
        <strain>BCG / Pasteur 1173P2</strain>
    </source>
</reference>
<accession>A1KPT5</accession>
<sequence>MLLAIDVRNTHTVVGLLSGMKEHAKVVQQWRIRTESEVTADELALTIDGLIGEDSERLTGTAALSTVPSVLHEVRIMLDQYWPSVPHVLIEPGVRTGIPLLVDNPKEVGADRIVNCLAAYDRFRKAAIVVDFGSSICVDVVSAKGEFLGGAIAPGVQVSSDAAAARSAALRRVELARPRSVVGKNTVECMQAGAVFGFAGLVDGLVGRIREDVSGFSVDHDVAIVATGHTAPLLLPELHTVDHYDQHLTLQGLRLVFERNLEVQRGRLKTAR</sequence>
<dbReference type="EC" id="2.7.1.33" evidence="1"/>
<dbReference type="EMBL" id="AM408590">
    <property type="protein sequence ID" value="CAL73653.1"/>
    <property type="molecule type" value="Genomic_DNA"/>
</dbReference>
<dbReference type="RefSeq" id="WP_003419517.1">
    <property type="nucleotide sequence ID" value="NC_008769.1"/>
</dbReference>
<dbReference type="SMR" id="A1KPT5"/>
<dbReference type="KEGG" id="mbb:BCG_3664c"/>
<dbReference type="HOGENOM" id="CLU_066627_1_0_11"/>
<dbReference type="UniPathway" id="UPA00241">
    <property type="reaction ID" value="UER00352"/>
</dbReference>
<dbReference type="Proteomes" id="UP000001472">
    <property type="component" value="Chromosome"/>
</dbReference>
<dbReference type="GO" id="GO:0005737">
    <property type="term" value="C:cytoplasm"/>
    <property type="evidence" value="ECO:0007669"/>
    <property type="project" value="UniProtKB-SubCell"/>
</dbReference>
<dbReference type="GO" id="GO:0005524">
    <property type="term" value="F:ATP binding"/>
    <property type="evidence" value="ECO:0007669"/>
    <property type="project" value="UniProtKB-UniRule"/>
</dbReference>
<dbReference type="GO" id="GO:0046872">
    <property type="term" value="F:metal ion binding"/>
    <property type="evidence" value="ECO:0007669"/>
    <property type="project" value="UniProtKB-KW"/>
</dbReference>
<dbReference type="GO" id="GO:0004594">
    <property type="term" value="F:pantothenate kinase activity"/>
    <property type="evidence" value="ECO:0007669"/>
    <property type="project" value="UniProtKB-UniRule"/>
</dbReference>
<dbReference type="GO" id="GO:0015937">
    <property type="term" value="P:coenzyme A biosynthetic process"/>
    <property type="evidence" value="ECO:0007669"/>
    <property type="project" value="UniProtKB-UniRule"/>
</dbReference>
<dbReference type="CDD" id="cd24015">
    <property type="entry name" value="ASKHA_NBD_PanK-III"/>
    <property type="match status" value="1"/>
</dbReference>
<dbReference type="FunFam" id="3.30.420.40:FF:000146">
    <property type="entry name" value="Type III pantothenate kinase"/>
    <property type="match status" value="1"/>
</dbReference>
<dbReference type="FunFam" id="3.30.420.40:FF:000223">
    <property type="entry name" value="Type III pantothenate kinase"/>
    <property type="match status" value="1"/>
</dbReference>
<dbReference type="Gene3D" id="3.30.420.40">
    <property type="match status" value="2"/>
</dbReference>
<dbReference type="HAMAP" id="MF_01274">
    <property type="entry name" value="Pantothen_kinase_3"/>
    <property type="match status" value="1"/>
</dbReference>
<dbReference type="InterPro" id="IPR043129">
    <property type="entry name" value="ATPase_NBD"/>
</dbReference>
<dbReference type="InterPro" id="IPR004619">
    <property type="entry name" value="Type_III_PanK"/>
</dbReference>
<dbReference type="NCBIfam" id="TIGR00671">
    <property type="entry name" value="baf"/>
    <property type="match status" value="1"/>
</dbReference>
<dbReference type="NCBIfam" id="NF009845">
    <property type="entry name" value="PRK13318.1-3"/>
    <property type="match status" value="1"/>
</dbReference>
<dbReference type="PANTHER" id="PTHR34265">
    <property type="entry name" value="TYPE III PANTOTHENATE KINASE"/>
    <property type="match status" value="1"/>
</dbReference>
<dbReference type="PANTHER" id="PTHR34265:SF1">
    <property type="entry name" value="TYPE III PANTOTHENATE KINASE"/>
    <property type="match status" value="1"/>
</dbReference>
<dbReference type="Pfam" id="PF03309">
    <property type="entry name" value="Pan_kinase"/>
    <property type="match status" value="1"/>
</dbReference>
<dbReference type="SUPFAM" id="SSF53067">
    <property type="entry name" value="Actin-like ATPase domain"/>
    <property type="match status" value="2"/>
</dbReference>
<keyword id="KW-0067">ATP-binding</keyword>
<keyword id="KW-0173">Coenzyme A biosynthesis</keyword>
<keyword id="KW-0963">Cytoplasm</keyword>
<keyword id="KW-0418">Kinase</keyword>
<keyword id="KW-0479">Metal-binding</keyword>
<keyword id="KW-0547">Nucleotide-binding</keyword>
<keyword id="KW-0630">Potassium</keyword>
<keyword id="KW-0808">Transferase</keyword>
<feature type="chain" id="PRO_1000054390" description="Type III pantothenate kinase">
    <location>
        <begin position="1"/>
        <end position="272"/>
    </location>
</feature>
<feature type="active site" description="Proton acceptor" evidence="1">
    <location>
        <position position="111"/>
    </location>
</feature>
<feature type="binding site" evidence="1">
    <location>
        <begin position="6"/>
        <end position="13"/>
    </location>
    <ligand>
        <name>ATP</name>
        <dbReference type="ChEBI" id="CHEBI:30616"/>
    </ligand>
</feature>
<feature type="binding site" evidence="1">
    <location>
        <begin position="109"/>
        <end position="112"/>
    </location>
    <ligand>
        <name>substrate</name>
    </ligand>
</feature>
<feature type="binding site" evidence="1">
    <location>
        <position position="131"/>
    </location>
    <ligand>
        <name>K(+)</name>
        <dbReference type="ChEBI" id="CHEBI:29103"/>
    </ligand>
</feature>
<feature type="binding site" evidence="1">
    <location>
        <position position="134"/>
    </location>
    <ligand>
        <name>ATP</name>
        <dbReference type="ChEBI" id="CHEBI:30616"/>
    </ligand>
</feature>
<feature type="binding site" evidence="1">
    <location>
        <position position="186"/>
    </location>
    <ligand>
        <name>substrate</name>
    </ligand>
</feature>
<proteinExistence type="inferred from homology"/>